<proteinExistence type="inferred from homology"/>
<protein>
    <recommendedName>
        <fullName evidence="1">dCTP deaminase</fullName>
        <ecNumber evidence="1">3.5.4.13</ecNumber>
    </recommendedName>
    <alternativeName>
        <fullName evidence="1">Deoxycytidine triphosphate deaminase</fullName>
    </alternativeName>
</protein>
<organism>
    <name type="scientific">Pyrobaculum arsenaticum (strain DSM 13514 / JCM 11321 / PZ6)</name>
    <dbReference type="NCBI Taxonomy" id="340102"/>
    <lineage>
        <taxon>Archaea</taxon>
        <taxon>Thermoproteota</taxon>
        <taxon>Thermoprotei</taxon>
        <taxon>Thermoproteales</taxon>
        <taxon>Thermoproteaceae</taxon>
        <taxon>Pyrobaculum</taxon>
    </lineage>
</organism>
<feature type="chain" id="PRO_1000117987" description="dCTP deaminase">
    <location>
        <begin position="1"/>
        <end position="176"/>
    </location>
</feature>
<feature type="active site" description="Proton donor/acceptor" evidence="1">
    <location>
        <position position="125"/>
    </location>
</feature>
<feature type="binding site" evidence="1">
    <location>
        <begin position="99"/>
        <end position="104"/>
    </location>
    <ligand>
        <name>dCTP</name>
        <dbReference type="ChEBI" id="CHEBI:61481"/>
    </ligand>
</feature>
<feature type="binding site" evidence="1">
    <location>
        <position position="115"/>
    </location>
    <ligand>
        <name>dCTP</name>
        <dbReference type="ChEBI" id="CHEBI:61481"/>
    </ligand>
</feature>
<feature type="binding site" evidence="1">
    <location>
        <position position="163"/>
    </location>
    <ligand>
        <name>dCTP</name>
        <dbReference type="ChEBI" id="CHEBI:61481"/>
    </ligand>
</feature>
<evidence type="ECO:0000255" key="1">
    <source>
        <dbReference type="HAMAP-Rule" id="MF_00146"/>
    </source>
</evidence>
<sequence>MILANDELKRLISTGRLKVDPLYPDTVRENGLDLRIGGEYAIYAYESTVVRPCDLETAKPLFRIVKSDEVVIPPRNFVLLTTEEYVKMPDDVVGFANLRSTLARYGLVIPPTIVDAGFEGNITIEVVNESPNTIVLKRGMRFLHLVLAKAEGRAQYSGLYQGQRGVTPPKGLKGEC</sequence>
<name>DCD_PYRAR</name>
<dbReference type="EC" id="3.5.4.13" evidence="1"/>
<dbReference type="EMBL" id="CP000660">
    <property type="protein sequence ID" value="ABP51621.1"/>
    <property type="molecule type" value="Genomic_DNA"/>
</dbReference>
<dbReference type="SMR" id="A4WMK4"/>
<dbReference type="STRING" id="340102.Pars_2075"/>
<dbReference type="KEGG" id="pas:Pars_2075"/>
<dbReference type="HOGENOM" id="CLU_087476_3_0_2"/>
<dbReference type="OrthoDB" id="33242at2157"/>
<dbReference type="PhylomeDB" id="A4WMK4"/>
<dbReference type="UniPathway" id="UPA00610">
    <property type="reaction ID" value="UER00665"/>
</dbReference>
<dbReference type="Proteomes" id="UP000001567">
    <property type="component" value="Chromosome"/>
</dbReference>
<dbReference type="GO" id="GO:0008829">
    <property type="term" value="F:dCTP deaminase activity"/>
    <property type="evidence" value="ECO:0007669"/>
    <property type="project" value="UniProtKB-UniRule"/>
</dbReference>
<dbReference type="GO" id="GO:0000166">
    <property type="term" value="F:nucleotide binding"/>
    <property type="evidence" value="ECO:0007669"/>
    <property type="project" value="UniProtKB-KW"/>
</dbReference>
<dbReference type="GO" id="GO:0006226">
    <property type="term" value="P:dUMP biosynthetic process"/>
    <property type="evidence" value="ECO:0007669"/>
    <property type="project" value="UniProtKB-UniPathway"/>
</dbReference>
<dbReference type="GO" id="GO:0006229">
    <property type="term" value="P:dUTP biosynthetic process"/>
    <property type="evidence" value="ECO:0007669"/>
    <property type="project" value="UniProtKB-UniRule"/>
</dbReference>
<dbReference type="CDD" id="cd07557">
    <property type="entry name" value="trimeric_dUTPase"/>
    <property type="match status" value="1"/>
</dbReference>
<dbReference type="Gene3D" id="2.70.40.10">
    <property type="match status" value="1"/>
</dbReference>
<dbReference type="HAMAP" id="MF_00146">
    <property type="entry name" value="dCTP_deaminase"/>
    <property type="match status" value="1"/>
</dbReference>
<dbReference type="InterPro" id="IPR011962">
    <property type="entry name" value="dCTP_deaminase"/>
</dbReference>
<dbReference type="InterPro" id="IPR036157">
    <property type="entry name" value="dUTPase-like_sf"/>
</dbReference>
<dbReference type="InterPro" id="IPR033704">
    <property type="entry name" value="dUTPase_trimeric"/>
</dbReference>
<dbReference type="NCBIfam" id="TIGR02274">
    <property type="entry name" value="dCTP_deam"/>
    <property type="match status" value="1"/>
</dbReference>
<dbReference type="PANTHER" id="PTHR42680">
    <property type="entry name" value="DCTP DEAMINASE"/>
    <property type="match status" value="1"/>
</dbReference>
<dbReference type="PANTHER" id="PTHR42680:SF3">
    <property type="entry name" value="DCTP DEAMINASE"/>
    <property type="match status" value="1"/>
</dbReference>
<dbReference type="Pfam" id="PF22769">
    <property type="entry name" value="DCD"/>
    <property type="match status" value="1"/>
</dbReference>
<dbReference type="SUPFAM" id="SSF51283">
    <property type="entry name" value="dUTPase-like"/>
    <property type="match status" value="1"/>
</dbReference>
<accession>A4WMK4</accession>
<comment type="function">
    <text evidence="1">Catalyzes the deamination of dCTP to dUTP.</text>
</comment>
<comment type="catalytic activity">
    <reaction evidence="1">
        <text>dCTP + H2O + H(+) = dUTP + NH4(+)</text>
        <dbReference type="Rhea" id="RHEA:22680"/>
        <dbReference type="ChEBI" id="CHEBI:15377"/>
        <dbReference type="ChEBI" id="CHEBI:15378"/>
        <dbReference type="ChEBI" id="CHEBI:28938"/>
        <dbReference type="ChEBI" id="CHEBI:61481"/>
        <dbReference type="ChEBI" id="CHEBI:61555"/>
        <dbReference type="EC" id="3.5.4.13"/>
    </reaction>
</comment>
<comment type="pathway">
    <text evidence="1">Pyrimidine metabolism; dUMP biosynthesis; dUMP from dCTP (dUTP route): step 1/2.</text>
</comment>
<comment type="subunit">
    <text evidence="1">Homotrimer.</text>
</comment>
<comment type="similarity">
    <text evidence="1">Belongs to the dCTP deaminase family.</text>
</comment>
<keyword id="KW-0378">Hydrolase</keyword>
<keyword id="KW-0546">Nucleotide metabolism</keyword>
<keyword id="KW-0547">Nucleotide-binding</keyword>
<gene>
    <name evidence="1" type="primary">dcd</name>
    <name type="ordered locus">Pars_2075</name>
</gene>
<reference key="1">
    <citation type="submission" date="2007-04" db="EMBL/GenBank/DDBJ databases">
        <title>Complete sequence of Pyrobaculum arsenaticum DSM 13514.</title>
        <authorList>
            <consortium name="US DOE Joint Genome Institute"/>
            <person name="Copeland A."/>
            <person name="Lucas S."/>
            <person name="Lapidus A."/>
            <person name="Barry K."/>
            <person name="Glavina del Rio T."/>
            <person name="Dalin E."/>
            <person name="Tice H."/>
            <person name="Pitluck S."/>
            <person name="Chain P."/>
            <person name="Malfatti S."/>
            <person name="Shin M."/>
            <person name="Vergez L."/>
            <person name="Schmutz J."/>
            <person name="Larimer F."/>
            <person name="Land M."/>
            <person name="Hauser L."/>
            <person name="Kyrpides N."/>
            <person name="Mikhailova N."/>
            <person name="Cozen A.E."/>
            <person name="Fitz-Gibbon S.T."/>
            <person name="House C.H."/>
            <person name="Saltikov C."/>
            <person name="Lowe T.M."/>
            <person name="Richardson P."/>
        </authorList>
    </citation>
    <scope>NUCLEOTIDE SEQUENCE [LARGE SCALE GENOMIC DNA]</scope>
    <source>
        <strain>ATCC 700994 / DSM 13514 / JCM 11321 / PZ6</strain>
    </source>
</reference>